<reference key="1">
    <citation type="journal article" date="2002" name="Curr. Biol.">
        <title>A comprehensive collection of chicken cDNAs.</title>
        <authorList>
            <person name="Boardman P.E."/>
            <person name="Sanz-Ezquerro J."/>
            <person name="Overton I.M."/>
            <person name="Burt D.W."/>
            <person name="Bosch E."/>
            <person name="Fong W.T."/>
            <person name="Tickle C."/>
            <person name="Brown W.R."/>
            <person name="Wilson S.A."/>
            <person name="Hubbard S.J."/>
        </authorList>
    </citation>
    <scope>NUCLEOTIDE SEQUENCE [LARGE SCALE MRNA]</scope>
    <source>
        <strain>White Leghorn Hisex</strain>
    </source>
</reference>
<reference key="2">
    <citation type="journal article" date="2009" name="J. Cell Biol.">
        <title>The CENP-S complex is essential for the stable assembly of outer kinetochore structure.</title>
        <authorList>
            <person name="Amano M."/>
            <person name="Suzuki A."/>
            <person name="Hori T."/>
            <person name="Backer C."/>
            <person name="Okawa K."/>
            <person name="Cheeseman I.M."/>
            <person name="Fukagawa T."/>
        </authorList>
    </citation>
    <scope>FUNCTION</scope>
    <scope>INTERACTION WITH CENPS</scope>
    <scope>IDENTIFICATION BY MASS SPECTROMETRY</scope>
    <scope>SUBCELLULAR LOCATION</scope>
</reference>
<reference key="3">
    <citation type="journal article" date="2012" name="Cell">
        <title>CENP-T-W-S-X forms a unique centromeric chromatin structure with a histone-like fold.</title>
        <authorList>
            <person name="Nishino T."/>
            <person name="Takeuchi K."/>
            <person name="Gascoigne K.E."/>
            <person name="Suzuki A."/>
            <person name="Hori T."/>
            <person name="Oyama T."/>
            <person name="Morikawa K."/>
            <person name="Cheeseman I.M."/>
            <person name="Fukagawa T."/>
        </authorList>
    </citation>
    <scope>X-RAY CRYSTALLOGRAPHY (2.15 ANGSTROMS)</scope>
    <scope>FUNCTION</scope>
    <scope>INTERACTION WITH CENPS; CENPT AND CEPNW</scope>
    <scope>SUBCELLULAR LOCATION</scope>
    <scope>MUTAGENESIS OF ARG-9; ARG-27 AND LYS-62</scope>
</reference>
<comment type="function">
    <text evidence="1 2 3">DNA-binding component of the Fanconi anemia (FA) core complex. Required for the normal activation of the FA pathway, leading to monoubiquitination of the FANCI-FANCD2 complex in response to DNA damage, cellular resistance to DNA cross-linking drugs, and prevention of chromosomal breakage. In complex with CENPS (MHF heterodimer), crucial cofactor for FANCM in both binding and ATP-dependent remodeling of DNA. Stabilizes FANCM. In complex with CENPS and FANCM (but not other FANC proteins), rapidly recruited to blocked forks and promotes gene conversion at blocked replication forks (By similarity). In complex with CENPS, CENPT and CENPW (CENP-T-W-S-X heterotetramer), involved in the formation of a functional kinetochore outer plate, which is essential for kinetochore-microtubule attachment and faithful mitotic progression (PubMed:19620631, PubMed:22304917). As a component of MHF and CENP-T-W-S-X complexes, binds DNA and bends it to form a nucleosome-like structure. DNA-binding function is fulfilled in the presence of CENPS, with the following preference for DNA substates: Holliday junction &gt; double-stranded &gt; splay arm &gt; single-stranded. Does not bind DNA on its own (By similarity).</text>
</comment>
<comment type="subunit">
    <text evidence="1 2 3">Heterodimer with CENPX, sometimes called MHF; this interaction stabilizes both partners (PubMed:19620631, PubMed:22304917). MHF heterodimers can assemble to form tetrameric structures (PubMed:22304917). MHF also coassemble with CENPT-CENPW heterodimers at centromeres to form the tetrameric CENP-T-W-S-X complex (PubMed:22304917). Forms a discrete complex with FANCM and CENPX, called FANCM-MHF; this interaction, probably mediated by direct binding between CENPS and FANCM, leads to synergistic activation of double-stranded DNA binding and strongly stimulates FANCM-mediated DNA remodeling. Recruited by FANCM to the Fanconi anemia (FA) core complex, which consists of CENPS, CENPX, FANCA, FANCB, FANCC, FANCE, FANCF, FANCG, FANCL, FANCM, FAAP24 and FAAP100. The FA core complex associates with Bloom syndrome (BLM) complex, which consists of at least BLM, DNA topoisomerase 3-alpha (TOP3A), RMI1/BLAP75, RPA1/RPA70 and RPA2/RPA32. The super complex between FA and BLM is called BRAFT (By similarity).</text>
</comment>
<comment type="interaction">
    <interactant intactId="EBI-5590609">
        <id>P0DJH7</id>
    </interactant>
    <interactant intactId="EBI-5487792">
        <id>E1BSW7</id>
        <label>CENPS</label>
    </interactant>
    <organismsDiffer>false</organismsDiffer>
    <experiments>4</experiments>
</comment>
<comment type="subcellular location">
    <subcellularLocation>
        <location evidence="2">Nucleus</location>
    </subcellularLocation>
    <subcellularLocation>
        <location evidence="2">Chromosome</location>
        <location evidence="2">Centromere</location>
    </subcellularLocation>
    <subcellularLocation>
        <location evidence="2">Chromosome</location>
        <location evidence="2">Centromere</location>
        <location evidence="2">Kinetochore</location>
    </subcellularLocation>
    <text evidence="1">Assembly of CENPS and CENPX and its partner subunits CENPT and CENPW at centromeres occurs through a dynamic exchange mechanism. Although exchange is continuous in the cell cycle, de novo assembly starts principally during mid-late S phase and is complete by G2. CENPX being less stably bound at the kinetochore than CENPS.</text>
</comment>
<comment type="similarity">
    <text evidence="4">Belongs to the CENP-X/MHF2 family.</text>
</comment>
<dbReference type="EMBL" id="CN236791">
    <property type="status" value="NOT_ANNOTATED_CDS"/>
    <property type="molecule type" value="mRNA"/>
</dbReference>
<dbReference type="PDB" id="3B0B">
    <property type="method" value="X-ray"/>
    <property type="resolution" value="2.15 A"/>
    <property type="chains" value="C/D=2-80"/>
</dbReference>
<dbReference type="PDB" id="3VH5">
    <property type="method" value="X-ray"/>
    <property type="resolution" value="2.40 A"/>
    <property type="chains" value="D=2-80"/>
</dbReference>
<dbReference type="PDB" id="3VH6">
    <property type="method" value="X-ray"/>
    <property type="resolution" value="3.35 A"/>
    <property type="chains" value="D=2-80"/>
</dbReference>
<dbReference type="PDB" id="7DA0">
    <property type="method" value="X-ray"/>
    <property type="resolution" value="1.25 A"/>
    <property type="chains" value="C=2-80"/>
</dbReference>
<dbReference type="PDB" id="7DA1">
    <property type="method" value="X-ray"/>
    <property type="resolution" value="2.01 A"/>
    <property type="chains" value="C/D=2-80"/>
</dbReference>
<dbReference type="PDB" id="7DA2">
    <property type="method" value="X-ray"/>
    <property type="resolution" value="2.79 A"/>
    <property type="chains" value="B/D=2-80"/>
</dbReference>
<dbReference type="PDBsum" id="3B0B"/>
<dbReference type="PDBsum" id="3VH5"/>
<dbReference type="PDBsum" id="3VH6"/>
<dbReference type="PDBsum" id="7DA0"/>
<dbReference type="PDBsum" id="7DA1"/>
<dbReference type="PDBsum" id="7DA2"/>
<dbReference type="SMR" id="P0DJH7"/>
<dbReference type="FunCoup" id="P0DJH7">
    <property type="interactions" value="213"/>
</dbReference>
<dbReference type="IntAct" id="P0DJH7">
    <property type="interactions" value="1"/>
</dbReference>
<dbReference type="STRING" id="9031.ENSGALP00000071840"/>
<dbReference type="VEuPathDB" id="HostDB:geneid_101751277"/>
<dbReference type="InParanoid" id="P0DJH7"/>
<dbReference type="OrthoDB" id="2500381at2759"/>
<dbReference type="EvolutionaryTrace" id="P0DJH7"/>
<dbReference type="Proteomes" id="UP000000539">
    <property type="component" value="Unassembled WGS sequence"/>
</dbReference>
<dbReference type="GO" id="GO:0071821">
    <property type="term" value="C:FANCM-MHF complex"/>
    <property type="evidence" value="ECO:0000318"/>
    <property type="project" value="GO_Central"/>
</dbReference>
<dbReference type="GO" id="GO:0043240">
    <property type="term" value="C:Fanconi anaemia nuclear complex"/>
    <property type="evidence" value="ECO:0000318"/>
    <property type="project" value="GO_Central"/>
</dbReference>
<dbReference type="GO" id="GO:0000776">
    <property type="term" value="C:kinetochore"/>
    <property type="evidence" value="ECO:0007669"/>
    <property type="project" value="UniProtKB-KW"/>
</dbReference>
<dbReference type="GO" id="GO:0003677">
    <property type="term" value="F:DNA binding"/>
    <property type="evidence" value="ECO:0007669"/>
    <property type="project" value="UniProtKB-KW"/>
</dbReference>
<dbReference type="GO" id="GO:0046982">
    <property type="term" value="F:protein heterodimerization activity"/>
    <property type="evidence" value="ECO:0007669"/>
    <property type="project" value="InterPro"/>
</dbReference>
<dbReference type="GO" id="GO:0051301">
    <property type="term" value="P:cell division"/>
    <property type="evidence" value="ECO:0007669"/>
    <property type="project" value="UniProtKB-KW"/>
</dbReference>
<dbReference type="GO" id="GO:0006281">
    <property type="term" value="P:DNA repair"/>
    <property type="evidence" value="ECO:0007669"/>
    <property type="project" value="UniProtKB-KW"/>
</dbReference>
<dbReference type="GO" id="GO:0051382">
    <property type="term" value="P:kinetochore assembly"/>
    <property type="evidence" value="ECO:0007669"/>
    <property type="project" value="InterPro"/>
</dbReference>
<dbReference type="GO" id="GO:0031297">
    <property type="term" value="P:replication fork processing"/>
    <property type="evidence" value="ECO:0000318"/>
    <property type="project" value="GO_Central"/>
</dbReference>
<dbReference type="GO" id="GO:0000712">
    <property type="term" value="P:resolution of meiotic recombination intermediates"/>
    <property type="evidence" value="ECO:0000318"/>
    <property type="project" value="GO_Central"/>
</dbReference>
<dbReference type="CDD" id="cd22921">
    <property type="entry name" value="HFD_CENP-X"/>
    <property type="match status" value="1"/>
</dbReference>
<dbReference type="FunFam" id="1.20.5.4980:FF:000001">
    <property type="entry name" value="Centromere protein X"/>
    <property type="match status" value="1"/>
</dbReference>
<dbReference type="Gene3D" id="1.20.5.4980">
    <property type="match status" value="1"/>
</dbReference>
<dbReference type="Gene3D" id="6.10.130.30">
    <property type="match status" value="1"/>
</dbReference>
<dbReference type="InterPro" id="IPR018552">
    <property type="entry name" value="CENP-X"/>
</dbReference>
<dbReference type="InterPro" id="IPR009072">
    <property type="entry name" value="Histone-fold"/>
</dbReference>
<dbReference type="PANTHER" id="PTHR28680">
    <property type="entry name" value="CENTROMERE PROTEIN X"/>
    <property type="match status" value="1"/>
</dbReference>
<dbReference type="PANTHER" id="PTHR28680:SF1">
    <property type="entry name" value="CENTROMERE PROTEIN X"/>
    <property type="match status" value="1"/>
</dbReference>
<dbReference type="Pfam" id="PF09415">
    <property type="entry name" value="CENP-X"/>
    <property type="match status" value="1"/>
</dbReference>
<dbReference type="SUPFAM" id="SSF47113">
    <property type="entry name" value="Histone-fold"/>
    <property type="match status" value="1"/>
</dbReference>
<keyword id="KW-0002">3D-structure</keyword>
<keyword id="KW-0131">Cell cycle</keyword>
<keyword id="KW-0132">Cell division</keyword>
<keyword id="KW-0137">Centromere</keyword>
<keyword id="KW-0158">Chromosome</keyword>
<keyword id="KW-0227">DNA damage</keyword>
<keyword id="KW-0234">DNA repair</keyword>
<keyword id="KW-0238">DNA-binding</keyword>
<keyword id="KW-0995">Kinetochore</keyword>
<keyword id="KW-0498">Mitosis</keyword>
<keyword id="KW-0539">Nucleus</keyword>
<keyword id="KW-1185">Reference proteome</keyword>
<accession>P0DJH7</accession>
<name>CENPX_CHICK</name>
<protein>
    <recommendedName>
        <fullName>Centromere protein X</fullName>
        <shortName>CENP-X</shortName>
    </recommendedName>
</protein>
<feature type="chain" id="PRO_0000417385" description="Centromere protein X">
    <location>
        <begin position="1"/>
        <end position="80"/>
    </location>
</feature>
<feature type="mutagenesis site" description="Abolishes sequence-specific DNA binding; when associated with A-27 and A-62." evidence="3">
    <original>R</original>
    <variation>A</variation>
    <location>
        <position position="9"/>
    </location>
</feature>
<feature type="mutagenesis site" description="Abolishes sequence-specific DNA binding; when associated with A-9 and A-62." evidence="3">
    <original>R</original>
    <variation>A</variation>
    <location>
        <position position="27"/>
    </location>
</feature>
<feature type="mutagenesis site" description="Abolishes sequence-specific DNA binding; when associated with A-9 and A-27." evidence="3">
    <original>K</original>
    <variation>A</variation>
    <location>
        <position position="62"/>
    </location>
</feature>
<feature type="helix" evidence="5">
    <location>
        <begin position="10"/>
        <end position="18"/>
    </location>
</feature>
<feature type="helix" evidence="5">
    <location>
        <begin position="30"/>
        <end position="57"/>
    </location>
</feature>
<feature type="strand" evidence="5">
    <location>
        <begin position="61"/>
        <end position="63"/>
    </location>
</feature>
<feature type="helix" evidence="5">
    <location>
        <begin position="65"/>
        <end position="79"/>
    </location>
</feature>
<proteinExistence type="evidence at protein level"/>
<sequence length="80" mass="9257">MEEREGGFRKETVERLLRLHFRDGRTRVNGDALLLMAELLKVFVREAAARAARQAQAEDLEKVDIEHVEKVLPQLLLDFV</sequence>
<gene>
    <name type="primary">CENPX</name>
    <name type="synonym">STRA13</name>
</gene>
<evidence type="ECO:0000250" key="1">
    <source>
        <dbReference type="UniProtKB" id="A8MT69"/>
    </source>
</evidence>
<evidence type="ECO:0000269" key="2">
    <source>
    </source>
</evidence>
<evidence type="ECO:0000269" key="3">
    <source>
    </source>
</evidence>
<evidence type="ECO:0000305" key="4"/>
<evidence type="ECO:0007829" key="5">
    <source>
        <dbReference type="PDB" id="7DA0"/>
    </source>
</evidence>
<organism>
    <name type="scientific">Gallus gallus</name>
    <name type="common">Chicken</name>
    <dbReference type="NCBI Taxonomy" id="9031"/>
    <lineage>
        <taxon>Eukaryota</taxon>
        <taxon>Metazoa</taxon>
        <taxon>Chordata</taxon>
        <taxon>Craniata</taxon>
        <taxon>Vertebrata</taxon>
        <taxon>Euteleostomi</taxon>
        <taxon>Archelosauria</taxon>
        <taxon>Archosauria</taxon>
        <taxon>Dinosauria</taxon>
        <taxon>Saurischia</taxon>
        <taxon>Theropoda</taxon>
        <taxon>Coelurosauria</taxon>
        <taxon>Aves</taxon>
        <taxon>Neognathae</taxon>
        <taxon>Galloanserae</taxon>
        <taxon>Galliformes</taxon>
        <taxon>Phasianidae</taxon>
        <taxon>Phasianinae</taxon>
        <taxon>Gallus</taxon>
    </lineage>
</organism>